<protein>
    <recommendedName>
        <fullName evidence="6">PWWP domain-containing protein 5</fullName>
    </recommendedName>
</protein>
<accession>Q9LYZ0</accession>
<sequence length="632" mass="70512">MSTEPEGVESDSNADFAINASSFDYGMAHTSETLADPMSFQAQDLVVNLTGVERKVFVSARDDKDSLCNGVDFDADSDLLKNKDKKGFSKENLKLFDSDLVWAKLRSYPWWPGLVFDKSVASKAAMRHFKKGNVLVAYFGDCTFAWNNASQIKPFHQNFSQMQEQSNSAEFRDAIDCALDEVSRRVEFGLSCSCVSEEAYNKLKTQNIINAGIREDSSVRYGGDKLSDGISFEPAKLVDYMKHLACFPCYDATEKLQFVINRAQVLAFQQWKDYSHFIDYETFVRSVESAATLASLPEVNMDEGISAKKRKTDYKDNAEQTKEKTLSDLTVKKRCGSRSTEKLDGKSHSEKKRKVESSESGKSEKRIKKSQQKEDSVSKHSNEESLLSVGDTNKLQKTAEPCHGTGVENEMNSLTPTLKPCRASKSTEVENEKTKKPRHQELAERKISSPDEMLSSLHAANTSTGIPDSINIDPSNYEDFEKFINELFCSKLNGDSKKASITETSEPCDKKDSAEEEILPANKEITGSGSKEQIGLKDCSADSLPPYALVLNFADSGSVPSEEKLNEIFKRYGPLHESKTKVTMKGKRAKVVFKRGEDAKTAFSSAGKYSIFGPSLLSYRLEYVCPKRKKTT</sequence>
<name>PDP5_ARATH</name>
<proteinExistence type="evidence at transcript level"/>
<keyword id="KW-0539">Nucleus</keyword>
<keyword id="KW-1185">Reference proteome</keyword>
<keyword id="KW-0804">Transcription</keyword>
<keyword id="KW-0805">Transcription regulation</keyword>
<comment type="function">
    <text evidence="1">May influence gene expression by regulating the function of the PRC2 complex and modulating H3K27me3 level.</text>
</comment>
<comment type="subunit">
    <text evidence="1">Component of the PRC2 (polycomb repressive complex 2) complex which regulates histone methylation on histone H3K27.</text>
</comment>
<comment type="subcellular location">
    <subcellularLocation>
        <location evidence="3">Nucleus</location>
    </subcellularLocation>
</comment>
<comment type="disruption phenotype">
    <text evidence="5">No visible flowering phenotype.</text>
</comment>
<comment type="similarity">
    <text evidence="7">Belongs to the PDP family.</text>
</comment>
<evidence type="ECO:0000250" key="1">
    <source>
        <dbReference type="UniProtKB" id="Q9FNE4"/>
    </source>
</evidence>
<evidence type="ECO:0000255" key="2">
    <source>
        <dbReference type="PROSITE-ProRule" id="PRU00162"/>
    </source>
</evidence>
<evidence type="ECO:0000255" key="3">
    <source>
        <dbReference type="PROSITE-ProRule" id="PRU00768"/>
    </source>
</evidence>
<evidence type="ECO:0000256" key="4">
    <source>
        <dbReference type="SAM" id="MobiDB-lite"/>
    </source>
</evidence>
<evidence type="ECO:0000269" key="5">
    <source>
    </source>
</evidence>
<evidence type="ECO:0000303" key="6">
    <source>
    </source>
</evidence>
<evidence type="ECO:0000305" key="7"/>
<evidence type="ECO:0000312" key="8">
    <source>
        <dbReference type="Araport" id="AT5G02950"/>
    </source>
</evidence>
<evidence type="ECO:0000312" key="9">
    <source>
        <dbReference type="EMBL" id="CAB86049.1"/>
    </source>
</evidence>
<reference key="1">
    <citation type="journal article" date="2000" name="Nature">
        <title>Sequence and analysis of chromosome 5 of the plant Arabidopsis thaliana.</title>
        <authorList>
            <person name="Tabata S."/>
            <person name="Kaneko T."/>
            <person name="Nakamura Y."/>
            <person name="Kotani H."/>
            <person name="Kato T."/>
            <person name="Asamizu E."/>
            <person name="Miyajima N."/>
            <person name="Sasamoto S."/>
            <person name="Kimura T."/>
            <person name="Hosouchi T."/>
            <person name="Kawashima K."/>
            <person name="Kohara M."/>
            <person name="Matsumoto M."/>
            <person name="Matsuno A."/>
            <person name="Muraki A."/>
            <person name="Nakayama S."/>
            <person name="Nakazaki N."/>
            <person name="Naruo K."/>
            <person name="Okumura S."/>
            <person name="Shinpo S."/>
            <person name="Takeuchi C."/>
            <person name="Wada T."/>
            <person name="Watanabe A."/>
            <person name="Yamada M."/>
            <person name="Yasuda M."/>
            <person name="Sato S."/>
            <person name="de la Bastide M."/>
            <person name="Huang E."/>
            <person name="Spiegel L."/>
            <person name="Gnoj L."/>
            <person name="O'Shaughnessy A."/>
            <person name="Preston R."/>
            <person name="Habermann K."/>
            <person name="Murray J."/>
            <person name="Johnson D."/>
            <person name="Rohlfing T."/>
            <person name="Nelson J."/>
            <person name="Stoneking T."/>
            <person name="Pepin K."/>
            <person name="Spieth J."/>
            <person name="Sekhon M."/>
            <person name="Armstrong J."/>
            <person name="Becker M."/>
            <person name="Belter E."/>
            <person name="Cordum H."/>
            <person name="Cordes M."/>
            <person name="Courtney L."/>
            <person name="Courtney W."/>
            <person name="Dante M."/>
            <person name="Du H."/>
            <person name="Edwards J."/>
            <person name="Fryman J."/>
            <person name="Haakensen B."/>
            <person name="Lamar E."/>
            <person name="Latreille P."/>
            <person name="Leonard S."/>
            <person name="Meyer R."/>
            <person name="Mulvaney E."/>
            <person name="Ozersky P."/>
            <person name="Riley A."/>
            <person name="Strowmatt C."/>
            <person name="Wagner-McPherson C."/>
            <person name="Wollam A."/>
            <person name="Yoakum M."/>
            <person name="Bell M."/>
            <person name="Dedhia N."/>
            <person name="Parnell L."/>
            <person name="Shah R."/>
            <person name="Rodriguez M."/>
            <person name="Hoon See L."/>
            <person name="Vil D."/>
            <person name="Baker J."/>
            <person name="Kirchoff K."/>
            <person name="Toth K."/>
            <person name="King L."/>
            <person name="Bahret A."/>
            <person name="Miller B."/>
            <person name="Marra M.A."/>
            <person name="Martienssen R."/>
            <person name="McCombie W.R."/>
            <person name="Wilson R.K."/>
            <person name="Murphy G."/>
            <person name="Bancroft I."/>
            <person name="Volckaert G."/>
            <person name="Wambutt R."/>
            <person name="Duesterhoeft A."/>
            <person name="Stiekema W."/>
            <person name="Pohl T."/>
            <person name="Entian K.-D."/>
            <person name="Terryn N."/>
            <person name="Hartley N."/>
            <person name="Bent E."/>
            <person name="Johnson S."/>
            <person name="Langham S.-A."/>
            <person name="McCullagh B."/>
            <person name="Robben J."/>
            <person name="Grymonprez B."/>
            <person name="Zimmermann W."/>
            <person name="Ramsperger U."/>
            <person name="Wedler H."/>
            <person name="Balke K."/>
            <person name="Wedler E."/>
            <person name="Peters S."/>
            <person name="van Staveren M."/>
            <person name="Dirkse W."/>
            <person name="Mooijman P."/>
            <person name="Klein Lankhorst R."/>
            <person name="Weitzenegger T."/>
            <person name="Bothe G."/>
            <person name="Rose M."/>
            <person name="Hauf J."/>
            <person name="Berneiser S."/>
            <person name="Hempel S."/>
            <person name="Feldpausch M."/>
            <person name="Lamberth S."/>
            <person name="Villarroel R."/>
            <person name="Gielen J."/>
            <person name="Ardiles W."/>
            <person name="Bents O."/>
            <person name="Lemcke K."/>
            <person name="Kolesov G."/>
            <person name="Mayer K.F.X."/>
            <person name="Rudd S."/>
            <person name="Schoof H."/>
            <person name="Schueller C."/>
            <person name="Zaccaria P."/>
            <person name="Mewes H.-W."/>
            <person name="Bevan M."/>
            <person name="Fransz P.F."/>
        </authorList>
    </citation>
    <scope>NUCLEOTIDE SEQUENCE [LARGE SCALE GENOMIC DNA]</scope>
    <source>
        <strain>cv. Columbia</strain>
    </source>
</reference>
<reference key="2">
    <citation type="journal article" date="2017" name="Plant J.">
        <title>Araport11: a complete reannotation of the Arabidopsis thaliana reference genome.</title>
        <authorList>
            <person name="Cheng C.Y."/>
            <person name="Krishnakumar V."/>
            <person name="Chan A.P."/>
            <person name="Thibaud-Nissen F."/>
            <person name="Schobel S."/>
            <person name="Town C.D."/>
        </authorList>
    </citation>
    <scope>GENOME REANNOTATION</scope>
    <source>
        <strain>cv. Columbia</strain>
    </source>
</reference>
<reference key="3">
    <citation type="submission" date="2009-03" db="EMBL/GenBank/DDBJ databases">
        <title>ORF cloning and analysis of Arabidopsis transcription factor genes.</title>
        <authorList>
            <person name="Fujita M."/>
            <person name="Mizukado S."/>
            <person name="Seki M."/>
            <person name="Shinozaki K."/>
            <person name="Mitsuda N."/>
            <person name="Takiguchi Y."/>
            <person name="Takagi M."/>
        </authorList>
    </citation>
    <scope>NUCLEOTIDE SEQUENCE [LARGE SCALE MRNA]</scope>
</reference>
<reference key="4">
    <citation type="journal article" date="2018" name="J. Integr. Plant Biol.">
        <title>Arabidopsis PWWP domain proteins mediate H3K27 trimethylation on FLC and regulate flowering time.</title>
        <authorList>
            <person name="Zhou J.X."/>
            <person name="Liu Z.W."/>
            <person name="Li Y.Q."/>
            <person name="Li L."/>
            <person name="Wang B."/>
            <person name="Chen S."/>
            <person name="He X.J."/>
        </authorList>
    </citation>
    <scope>DISRUPTION PHENOTYPE</scope>
    <scope>GENE FAMILY</scope>
    <scope>NOMENCLATURE</scope>
</reference>
<organism>
    <name type="scientific">Arabidopsis thaliana</name>
    <name type="common">Mouse-ear cress</name>
    <dbReference type="NCBI Taxonomy" id="3702"/>
    <lineage>
        <taxon>Eukaryota</taxon>
        <taxon>Viridiplantae</taxon>
        <taxon>Streptophyta</taxon>
        <taxon>Embryophyta</taxon>
        <taxon>Tracheophyta</taxon>
        <taxon>Spermatophyta</taxon>
        <taxon>Magnoliopsida</taxon>
        <taxon>eudicotyledons</taxon>
        <taxon>Gunneridae</taxon>
        <taxon>Pentapetalae</taxon>
        <taxon>rosids</taxon>
        <taxon>malvids</taxon>
        <taxon>Brassicales</taxon>
        <taxon>Brassicaceae</taxon>
        <taxon>Camelineae</taxon>
        <taxon>Arabidopsis</taxon>
    </lineage>
</organism>
<gene>
    <name evidence="6" type="primary">PDP5</name>
    <name evidence="8" type="ordered locus">At5g02950</name>
    <name evidence="9" type="ORF">F9G14.260</name>
</gene>
<feature type="chain" id="PRO_0000453273" description="PWWP domain-containing protein 5">
    <location>
        <begin position="1"/>
        <end position="632"/>
    </location>
</feature>
<feature type="domain" description="PWWP" evidence="2">
    <location>
        <begin position="97"/>
        <end position="158"/>
    </location>
</feature>
<feature type="region of interest" description="Disordered" evidence="4">
    <location>
        <begin position="310"/>
        <end position="452"/>
    </location>
</feature>
<feature type="short sequence motif" description="Nuclear localization signal" evidence="3">
    <location>
        <begin position="352"/>
        <end position="359"/>
    </location>
</feature>
<feature type="compositionally biased region" description="Basic and acidic residues" evidence="4">
    <location>
        <begin position="313"/>
        <end position="326"/>
    </location>
</feature>
<feature type="compositionally biased region" description="Basic and acidic residues" evidence="4">
    <location>
        <begin position="339"/>
        <end position="364"/>
    </location>
</feature>
<feature type="compositionally biased region" description="Basic and acidic residues" evidence="4">
    <location>
        <begin position="371"/>
        <end position="383"/>
    </location>
</feature>
<feature type="compositionally biased region" description="Basic and acidic residues" evidence="4">
    <location>
        <begin position="425"/>
        <end position="449"/>
    </location>
</feature>
<dbReference type="EMBL" id="AL162973">
    <property type="protein sequence ID" value="CAB86049.1"/>
    <property type="molecule type" value="Genomic_DNA"/>
</dbReference>
<dbReference type="EMBL" id="CP002688">
    <property type="protein sequence ID" value="AED90539.1"/>
    <property type="molecule type" value="Genomic_DNA"/>
</dbReference>
<dbReference type="EMBL" id="CP002688">
    <property type="protein sequence ID" value="ANM68804.1"/>
    <property type="molecule type" value="Genomic_DNA"/>
</dbReference>
<dbReference type="EMBL" id="AB493732">
    <property type="protein sequence ID" value="BAH30570.1"/>
    <property type="molecule type" value="mRNA"/>
</dbReference>
<dbReference type="PIR" id="T48316">
    <property type="entry name" value="T48316"/>
</dbReference>
<dbReference type="RefSeq" id="NP_001330526.1">
    <property type="nucleotide sequence ID" value="NM_001342681.1"/>
</dbReference>
<dbReference type="RefSeq" id="NP_195915.1">
    <property type="nucleotide sequence ID" value="NM_120373.3"/>
</dbReference>
<dbReference type="SMR" id="Q9LYZ0"/>
<dbReference type="FunCoup" id="Q9LYZ0">
    <property type="interactions" value="148"/>
</dbReference>
<dbReference type="STRING" id="3702.Q9LYZ0"/>
<dbReference type="iPTMnet" id="Q9LYZ0"/>
<dbReference type="PaxDb" id="3702-AT5G02950.1"/>
<dbReference type="ProteomicsDB" id="189241"/>
<dbReference type="EnsemblPlants" id="AT5G02950.1">
    <property type="protein sequence ID" value="AT5G02950.1"/>
    <property type="gene ID" value="AT5G02950"/>
</dbReference>
<dbReference type="EnsemblPlants" id="AT5G02950.2">
    <property type="protein sequence ID" value="AT5G02950.2"/>
    <property type="gene ID" value="AT5G02950"/>
</dbReference>
<dbReference type="GeneID" id="831728"/>
<dbReference type="Gramene" id="AT5G02950.1">
    <property type="protein sequence ID" value="AT5G02950.1"/>
    <property type="gene ID" value="AT5G02950"/>
</dbReference>
<dbReference type="Gramene" id="AT5G02950.2">
    <property type="protein sequence ID" value="AT5G02950.2"/>
    <property type="gene ID" value="AT5G02950"/>
</dbReference>
<dbReference type="KEGG" id="ath:AT5G02950"/>
<dbReference type="Araport" id="AT5G02950"/>
<dbReference type="TAIR" id="AT5G02950">
    <property type="gene designation" value="PDP5"/>
</dbReference>
<dbReference type="eggNOG" id="ENOG502QTFR">
    <property type="taxonomic scope" value="Eukaryota"/>
</dbReference>
<dbReference type="HOGENOM" id="CLU_005330_1_1_1"/>
<dbReference type="InParanoid" id="Q9LYZ0"/>
<dbReference type="OMA" id="EDRCDEE"/>
<dbReference type="PhylomeDB" id="Q9LYZ0"/>
<dbReference type="PRO" id="PR:Q9LYZ0"/>
<dbReference type="Proteomes" id="UP000006548">
    <property type="component" value="Chromosome 5"/>
</dbReference>
<dbReference type="ExpressionAtlas" id="Q9LYZ0">
    <property type="expression patterns" value="baseline and differential"/>
</dbReference>
<dbReference type="GO" id="GO:0035098">
    <property type="term" value="C:ESC/E(Z) complex"/>
    <property type="evidence" value="ECO:0000250"/>
    <property type="project" value="UniProtKB"/>
</dbReference>
<dbReference type="GO" id="GO:0006355">
    <property type="term" value="P:regulation of DNA-templated transcription"/>
    <property type="evidence" value="ECO:0000250"/>
    <property type="project" value="UniProtKB"/>
</dbReference>
<dbReference type="CDD" id="cd05162">
    <property type="entry name" value="PWWP"/>
    <property type="match status" value="1"/>
</dbReference>
<dbReference type="CDD" id="cd00590">
    <property type="entry name" value="RRM_SF"/>
    <property type="match status" value="1"/>
</dbReference>
<dbReference type="Gene3D" id="2.30.30.140">
    <property type="match status" value="1"/>
</dbReference>
<dbReference type="InterPro" id="IPR000313">
    <property type="entry name" value="PWWP_dom"/>
</dbReference>
<dbReference type="InterPro" id="IPR053063">
    <property type="entry name" value="PWWP_domain_containing_PDP"/>
</dbReference>
<dbReference type="PANTHER" id="PTHR42851">
    <property type="entry name" value="ALDOLASE-RELATED"/>
    <property type="match status" value="1"/>
</dbReference>
<dbReference type="PANTHER" id="PTHR42851:SF19">
    <property type="entry name" value="PWWP DOMAIN-CONTAINING PROTEIN 2-RELATED"/>
    <property type="match status" value="1"/>
</dbReference>
<dbReference type="Pfam" id="PF00855">
    <property type="entry name" value="PWWP"/>
    <property type="match status" value="1"/>
</dbReference>
<dbReference type="SMART" id="SM00293">
    <property type="entry name" value="PWWP"/>
    <property type="match status" value="1"/>
</dbReference>
<dbReference type="SUPFAM" id="SSF63748">
    <property type="entry name" value="Tudor/PWWP/MBT"/>
    <property type="match status" value="1"/>
</dbReference>
<dbReference type="PROSITE" id="PS50812">
    <property type="entry name" value="PWWP"/>
    <property type="match status" value="1"/>
</dbReference>